<protein>
    <recommendedName>
        <fullName>Uncharacterized protein D3</fullName>
    </recommendedName>
</protein>
<accession>Q5I152</accession>
<organismHost>
    <name type="scientific">Microplitis demolitor</name>
    <name type="common">Parasitoid wasp</name>
    <dbReference type="NCBI Taxonomy" id="69319"/>
</organismHost>
<name>YD3_MDBVW</name>
<sequence>MIFLKERTISVLGGYGTVTSATSRSIIHQLGIHLYGFLPYVDTPENLTTVNFFDILDGSGLQVILFSRKLVLYWSENFSWRTYIVLTLGGCVINFQTVSFEWNSTSR</sequence>
<reference key="1">
    <citation type="journal article" date="2006" name="Virology">
        <title>Polydnavirus genomes reflect their dual roles as mutualists and pathogens.</title>
        <authorList>
            <person name="Webb B.A."/>
            <person name="Strand M.R."/>
            <person name="Dickey S.E."/>
            <person name="Beck M.H."/>
            <person name="Hilgarth R.S."/>
            <person name="Barney W.E."/>
            <person name="Kadash K."/>
            <person name="Kroemer J.A."/>
            <person name="Lindstrom K.G."/>
            <person name="Rattanadechakul W."/>
            <person name="Shelby K.S."/>
            <person name="Thoetkiattikul H."/>
            <person name="Turnbull M.W."/>
            <person name="Witherell R.A."/>
        </authorList>
    </citation>
    <scope>NUCLEOTIDE SEQUENCE [GENOMIC DNA]</scope>
</reference>
<gene>
    <name type="primary">D3</name>
</gene>
<proteinExistence type="predicted"/>
<organism>
    <name type="scientific">Microplitis demolitor bracovirus (isolate Webb)</name>
    <name type="common">MdBV</name>
    <dbReference type="NCBI Taxonomy" id="654919"/>
    <lineage>
        <taxon>Viruses</taxon>
        <taxon>Viruses incertae sedis</taxon>
        <taxon>Polydnaviriformidae</taxon>
        <taxon>Bracoviriform</taxon>
        <taxon>Microplitis demolitor bracovirus</taxon>
    </lineage>
</organism>
<feature type="chain" id="PRO_0000405394" description="Uncharacterized protein D3">
    <location>
        <begin position="1"/>
        <end position="107"/>
    </location>
</feature>
<dbReference type="EMBL" id="AY875683">
    <property type="protein sequence ID" value="AAW51778.1"/>
    <property type="molecule type" value="Genomic_DNA"/>
</dbReference>
<dbReference type="RefSeq" id="YP_239376.1">
    <property type="nucleotide sequence ID" value="NC_007033.1"/>
</dbReference>
<dbReference type="KEGG" id="vg:5075810"/>
<dbReference type="Proteomes" id="UP000008168">
    <property type="component" value="Genome"/>
</dbReference>
<keyword id="KW-1185">Reference proteome</keyword>